<feature type="chain" id="PRO_1000093432" description="Peptide chain release factor 1">
    <location>
        <begin position="1"/>
        <end position="360"/>
    </location>
</feature>
<feature type="modified residue" description="N5-methylglutamine" evidence="1">
    <location>
        <position position="235"/>
    </location>
</feature>
<protein>
    <recommendedName>
        <fullName evidence="1">Peptide chain release factor 1</fullName>
        <shortName evidence="1">RF-1</shortName>
    </recommendedName>
</protein>
<evidence type="ECO:0000255" key="1">
    <source>
        <dbReference type="HAMAP-Rule" id="MF_00093"/>
    </source>
</evidence>
<comment type="function">
    <text evidence="1">Peptide chain release factor 1 directs the termination of translation in response to the peptide chain termination codons UAG and UAA.</text>
</comment>
<comment type="subcellular location">
    <subcellularLocation>
        <location evidence="1">Cytoplasm</location>
    </subcellularLocation>
</comment>
<comment type="PTM">
    <text evidence="1">Methylated by PrmC. Methylation increases the termination efficiency of RF1.</text>
</comment>
<comment type="similarity">
    <text evidence="1">Belongs to the prokaryotic/mitochondrial release factor family.</text>
</comment>
<name>RF1_BURM1</name>
<proteinExistence type="inferred from homology"/>
<keyword id="KW-0963">Cytoplasm</keyword>
<keyword id="KW-0488">Methylation</keyword>
<keyword id="KW-0648">Protein biosynthesis</keyword>
<keyword id="KW-1185">Reference proteome</keyword>
<sequence length="360" mass="40641">MKTSMQRKLDQLSTRLAELNDLLSRENVTADLDQYRKLTREHAELGPVVEQYALWRQSRSDETAAQELLADPSMRDFAEEEIRSARERMARLEVELQKMLLPKDPNDDRNIFVEIRAGTGGDESALFAGDLLRMYLRFAERQRWQVEMMSESPSDLGGYKEVIVRIAGQGAYSRLKFESGGHRVQRVPATETQGRIHTSACTVAVMPEADEIGEVEINLADLRIDTFRASGAGGQHINKTDSAVRVTHLPTGIVVECQDDRSQHKNKDRALKVLAARIKDKQYHEQHAKEAATRKSLIGSGDRSERIRTYNFPQGRMTDHRINLTLYRLEAIMDGDLDELIGALVSEHQAELLASLGDAD</sequence>
<dbReference type="EMBL" id="CP000868">
    <property type="protein sequence ID" value="ABX16572.1"/>
    <property type="molecule type" value="Genomic_DNA"/>
</dbReference>
<dbReference type="EMBL" id="AP009385">
    <property type="protein sequence ID" value="BAG42320.1"/>
    <property type="molecule type" value="Genomic_DNA"/>
</dbReference>
<dbReference type="RefSeq" id="WP_012214220.1">
    <property type="nucleotide sequence ID" value="NC_010084.1"/>
</dbReference>
<dbReference type="SMR" id="A9AJ68"/>
<dbReference type="STRING" id="395019.BMULJ_00347"/>
<dbReference type="KEGG" id="bmj:BMULJ_00347"/>
<dbReference type="KEGG" id="bmu:Bmul_2888"/>
<dbReference type="eggNOG" id="COG0216">
    <property type="taxonomic scope" value="Bacteria"/>
</dbReference>
<dbReference type="HOGENOM" id="CLU_036856_0_1_4"/>
<dbReference type="Proteomes" id="UP000008815">
    <property type="component" value="Chromosome 1"/>
</dbReference>
<dbReference type="GO" id="GO:0005737">
    <property type="term" value="C:cytoplasm"/>
    <property type="evidence" value="ECO:0007669"/>
    <property type="project" value="UniProtKB-SubCell"/>
</dbReference>
<dbReference type="GO" id="GO:0016149">
    <property type="term" value="F:translation release factor activity, codon specific"/>
    <property type="evidence" value="ECO:0007669"/>
    <property type="project" value="UniProtKB-UniRule"/>
</dbReference>
<dbReference type="FunFam" id="3.30.160.20:FF:000004">
    <property type="entry name" value="Peptide chain release factor 1"/>
    <property type="match status" value="1"/>
</dbReference>
<dbReference type="FunFam" id="3.30.70.1660:FF:000002">
    <property type="entry name" value="Peptide chain release factor 1"/>
    <property type="match status" value="1"/>
</dbReference>
<dbReference type="FunFam" id="3.30.70.1660:FF:000004">
    <property type="entry name" value="Peptide chain release factor 1"/>
    <property type="match status" value="1"/>
</dbReference>
<dbReference type="Gene3D" id="3.30.160.20">
    <property type="match status" value="1"/>
</dbReference>
<dbReference type="Gene3D" id="3.30.70.1660">
    <property type="match status" value="1"/>
</dbReference>
<dbReference type="Gene3D" id="6.10.140.1950">
    <property type="match status" value="1"/>
</dbReference>
<dbReference type="HAMAP" id="MF_00093">
    <property type="entry name" value="Rel_fac_1"/>
    <property type="match status" value="1"/>
</dbReference>
<dbReference type="InterPro" id="IPR005139">
    <property type="entry name" value="PCRF"/>
</dbReference>
<dbReference type="InterPro" id="IPR000352">
    <property type="entry name" value="Pep_chain_release_fac_I"/>
</dbReference>
<dbReference type="InterPro" id="IPR045853">
    <property type="entry name" value="Pep_chain_release_fac_I_sf"/>
</dbReference>
<dbReference type="InterPro" id="IPR050057">
    <property type="entry name" value="Prokaryotic/Mito_RF"/>
</dbReference>
<dbReference type="InterPro" id="IPR004373">
    <property type="entry name" value="RF-1"/>
</dbReference>
<dbReference type="NCBIfam" id="TIGR00019">
    <property type="entry name" value="prfA"/>
    <property type="match status" value="1"/>
</dbReference>
<dbReference type="NCBIfam" id="NF001859">
    <property type="entry name" value="PRK00591.1"/>
    <property type="match status" value="1"/>
</dbReference>
<dbReference type="PANTHER" id="PTHR43804">
    <property type="entry name" value="LD18447P"/>
    <property type="match status" value="1"/>
</dbReference>
<dbReference type="PANTHER" id="PTHR43804:SF7">
    <property type="entry name" value="LD18447P"/>
    <property type="match status" value="1"/>
</dbReference>
<dbReference type="Pfam" id="PF03462">
    <property type="entry name" value="PCRF"/>
    <property type="match status" value="1"/>
</dbReference>
<dbReference type="Pfam" id="PF00472">
    <property type="entry name" value="RF-1"/>
    <property type="match status" value="1"/>
</dbReference>
<dbReference type="SMART" id="SM00937">
    <property type="entry name" value="PCRF"/>
    <property type="match status" value="1"/>
</dbReference>
<dbReference type="SUPFAM" id="SSF75620">
    <property type="entry name" value="Release factor"/>
    <property type="match status" value="1"/>
</dbReference>
<dbReference type="PROSITE" id="PS00745">
    <property type="entry name" value="RF_PROK_I"/>
    <property type="match status" value="1"/>
</dbReference>
<gene>
    <name evidence="1" type="primary">prfA</name>
    <name type="ordered locus">Bmul_2888</name>
    <name type="ordered locus">BMULJ_00347</name>
</gene>
<reference key="1">
    <citation type="submission" date="2007-10" db="EMBL/GenBank/DDBJ databases">
        <title>Complete sequence of chromosome 1 of Burkholderia multivorans ATCC 17616.</title>
        <authorList>
            <person name="Copeland A."/>
            <person name="Lucas S."/>
            <person name="Lapidus A."/>
            <person name="Barry K."/>
            <person name="Glavina del Rio T."/>
            <person name="Dalin E."/>
            <person name="Tice H."/>
            <person name="Pitluck S."/>
            <person name="Chain P."/>
            <person name="Malfatti S."/>
            <person name="Shin M."/>
            <person name="Vergez L."/>
            <person name="Schmutz J."/>
            <person name="Larimer F."/>
            <person name="Land M."/>
            <person name="Hauser L."/>
            <person name="Kyrpides N."/>
            <person name="Kim E."/>
            <person name="Tiedje J."/>
            <person name="Richardson P."/>
        </authorList>
    </citation>
    <scope>NUCLEOTIDE SEQUENCE [LARGE SCALE GENOMIC DNA]</scope>
    <source>
        <strain>ATCC 17616 / 249</strain>
    </source>
</reference>
<reference key="2">
    <citation type="submission" date="2007-04" db="EMBL/GenBank/DDBJ databases">
        <title>Complete genome sequence of Burkholderia multivorans ATCC 17616.</title>
        <authorList>
            <person name="Ohtsubo Y."/>
            <person name="Yamashita A."/>
            <person name="Kurokawa K."/>
            <person name="Takami H."/>
            <person name="Yuhara S."/>
            <person name="Nishiyama E."/>
            <person name="Endo R."/>
            <person name="Miyazaki R."/>
            <person name="Ono A."/>
            <person name="Yano K."/>
            <person name="Ito M."/>
            <person name="Sota M."/>
            <person name="Yuji N."/>
            <person name="Hattori M."/>
            <person name="Tsuda M."/>
        </authorList>
    </citation>
    <scope>NUCLEOTIDE SEQUENCE [LARGE SCALE GENOMIC DNA]</scope>
    <source>
        <strain>ATCC 17616 / 249</strain>
    </source>
</reference>
<accession>A9AJ68</accession>
<organism>
    <name type="scientific">Burkholderia multivorans (strain ATCC 17616 / 249)</name>
    <dbReference type="NCBI Taxonomy" id="395019"/>
    <lineage>
        <taxon>Bacteria</taxon>
        <taxon>Pseudomonadati</taxon>
        <taxon>Pseudomonadota</taxon>
        <taxon>Betaproteobacteria</taxon>
        <taxon>Burkholderiales</taxon>
        <taxon>Burkholderiaceae</taxon>
        <taxon>Burkholderia</taxon>
        <taxon>Burkholderia cepacia complex</taxon>
    </lineage>
</organism>